<accession>P56696</accession>
<accession>O96025</accession>
<feature type="chain" id="PRO_0000054037" description="Potassium voltage-gated channel subfamily KQT member 4">
    <location>
        <begin position="1"/>
        <end position="695"/>
    </location>
</feature>
<feature type="topological domain" description="Cytoplasmic" evidence="3">
    <location>
        <begin position="1"/>
        <end position="96"/>
    </location>
</feature>
<feature type="transmembrane region" description="Helical; Name=Segment S1" evidence="16 21">
    <location>
        <begin position="97"/>
        <end position="118"/>
    </location>
</feature>
<feature type="topological domain" description="Extracellular" evidence="3">
    <location>
        <begin position="119"/>
        <end position="129"/>
    </location>
</feature>
<feature type="transmembrane region" description="Helical; Name=Segment S2" evidence="16 21">
    <location>
        <begin position="130"/>
        <end position="152"/>
    </location>
</feature>
<feature type="topological domain" description="Cytoplasmic" evidence="3">
    <location>
        <begin position="153"/>
        <end position="168"/>
    </location>
</feature>
<feature type="transmembrane region" description="Helical; Name=Segment S3" evidence="16 21">
    <location>
        <begin position="169"/>
        <end position="191"/>
    </location>
</feature>
<feature type="topological domain" description="Extracellular" evidence="3">
    <location>
        <begin position="192"/>
        <end position="202"/>
    </location>
</feature>
<feature type="transmembrane region" description="Helical; Voltage-sensor; Name=Segment S4" evidence="16 21">
    <location>
        <begin position="203"/>
        <end position="223"/>
    </location>
</feature>
<feature type="topological domain" description="Cytoplasmic" evidence="3">
    <location>
        <begin position="224"/>
        <end position="235"/>
    </location>
</feature>
<feature type="transmembrane region" description="Helical; Name=Segment S5" evidence="16 21">
    <location>
        <begin position="236"/>
        <end position="258"/>
    </location>
</feature>
<feature type="topological domain" description="Extracellular" evidence="3">
    <location>
        <begin position="259"/>
        <end position="270"/>
    </location>
</feature>
<feature type="intramembrane region" description="Pore-forming; Name=Segment H5" evidence="3">
    <location>
        <begin position="271"/>
        <end position="292"/>
    </location>
</feature>
<feature type="topological domain" description="Extracellular" evidence="3">
    <location>
        <position position="293"/>
    </location>
</feature>
<feature type="transmembrane region" description="Helical; Name=Segment S6" evidence="16 21">
    <location>
        <begin position="294"/>
        <end position="322"/>
    </location>
</feature>
<feature type="topological domain" description="Cytoplasmic" evidence="3">
    <location>
        <begin position="323"/>
        <end position="695"/>
    </location>
</feature>
<feature type="region of interest" description="Disordered" evidence="4">
    <location>
        <begin position="1"/>
        <end position="21"/>
    </location>
</feature>
<feature type="region of interest" description="Interaction with CALM" evidence="15">
    <location>
        <begin position="342"/>
        <end position="351"/>
    </location>
</feature>
<feature type="region of interest" description="Disordered" evidence="4">
    <location>
        <begin position="400"/>
        <end position="480"/>
    </location>
</feature>
<feature type="region of interest" description="Disordered" evidence="4">
    <location>
        <begin position="496"/>
        <end position="515"/>
    </location>
</feature>
<feature type="region of interest" description="Interaction with CALM" evidence="1">
    <location>
        <begin position="535"/>
        <end position="549"/>
    </location>
</feature>
<feature type="region of interest" description="C-terminal assembly domain (tetramerization)" evidence="11">
    <location>
        <begin position="546"/>
        <end position="650"/>
    </location>
</feature>
<feature type="region of interest" description="Disordered" evidence="4">
    <location>
        <begin position="587"/>
        <end position="606"/>
    </location>
</feature>
<feature type="coiled-coil region" evidence="11">
    <location>
        <begin position="615"/>
        <end position="636"/>
    </location>
</feature>
<feature type="compositionally biased region" description="Polar residues" evidence="4">
    <location>
        <begin position="443"/>
        <end position="452"/>
    </location>
</feature>
<feature type="compositionally biased region" description="Polar residues" evidence="4">
    <location>
        <begin position="463"/>
        <end position="480"/>
    </location>
</feature>
<feature type="compositionally biased region" description="Basic and acidic residues" evidence="4">
    <location>
        <begin position="591"/>
        <end position="605"/>
    </location>
</feature>
<feature type="binding site" evidence="16 21">
    <location>
        <position position="93"/>
    </location>
    <ligand>
        <name>a 1,2-diacyl-sn-glycero-3-phospho-(1D-myo-inositol-4,5-bisphosphate)</name>
        <dbReference type="ChEBI" id="CHEBI:58456"/>
        <label>1</label>
    </ligand>
</feature>
<feature type="binding site" evidence="16 21">
    <location>
        <position position="172"/>
    </location>
    <ligand>
        <name>a 1,2-diacyl-sn-glycero-3-phospho-(1D-myo-inositol-4,5-bisphosphate)</name>
        <dbReference type="ChEBI" id="CHEBI:58456"/>
        <label>1</label>
    </ligand>
</feature>
<feature type="binding site" evidence="16 21">
    <location>
        <position position="219"/>
    </location>
    <ligand>
        <name>a 1,2-diacyl-sn-glycero-3-phospho-(1D-myo-inositol-4,5-bisphosphate)</name>
        <dbReference type="ChEBI" id="CHEBI:58456"/>
        <label>1</label>
    </ligand>
</feature>
<feature type="binding site" evidence="16 21">
    <location>
        <position position="220"/>
    </location>
    <ligand>
        <name>a 1,2-diacyl-sn-glycero-3-phospho-(1D-myo-inositol-4,5-bisphosphate)</name>
        <dbReference type="ChEBI" id="CHEBI:58456"/>
        <label>1</label>
    </ligand>
</feature>
<feature type="binding site" description="in chain A" evidence="16 21">
    <location>
        <position position="220"/>
    </location>
    <ligand>
        <name>a 1,2-diacyl-sn-glycero-3-phospho-(1D-myo-inositol-4,5-bisphosphate)</name>
        <dbReference type="ChEBI" id="CHEBI:58456"/>
        <label>2</label>
        <note>ligand shared between two neighboring KCNQ4 subunits</note>
    </ligand>
</feature>
<feature type="binding site" evidence="16 21">
    <location>
        <position position="225"/>
    </location>
    <ligand>
        <name>a 1,2-diacyl-sn-glycero-3-phospho-(1D-myo-inositol-4,5-bisphosphate)</name>
        <dbReference type="ChEBI" id="CHEBI:58456"/>
        <label>1</label>
    </ligand>
</feature>
<feature type="binding site" description="in chain B" evidence="16 21">
    <location>
        <position position="235"/>
    </location>
    <ligand>
        <name>a 1,2-diacyl-sn-glycero-3-phospho-(1D-myo-inositol-4,5-bisphosphate)</name>
        <dbReference type="ChEBI" id="CHEBI:58456"/>
        <label>2</label>
        <note>ligand shared between two neighboring KCNQ4 subunits</note>
    </ligand>
</feature>
<feature type="binding site" description="in chain A" evidence="16 21">
    <location>
        <position position="330"/>
    </location>
    <ligand>
        <name>a 1,2-diacyl-sn-glycero-3-phospho-(1D-myo-inositol-4,5-bisphosphate)</name>
        <dbReference type="ChEBI" id="CHEBI:58456"/>
        <label>2</label>
        <note>ligand shared between two neighboring KCNQ4 subunits</note>
    </ligand>
</feature>
<feature type="binding site" description="in chain A" evidence="16 21">
    <location>
        <position position="333"/>
    </location>
    <ligand>
        <name>a 1,2-diacyl-sn-glycero-3-phospho-(1D-myo-inositol-4,5-bisphosphate)</name>
        <dbReference type="ChEBI" id="CHEBI:58456"/>
        <label>2</label>
        <note>ligand shared between two neighboring KCNQ4 subunits</note>
    </ligand>
</feature>
<feature type="splice variant" id="VSP_001013" description="In isoform 2." evidence="17">
    <location>
        <begin position="377"/>
        <end position="430"/>
    </location>
</feature>
<feature type="sequence variant" id="VAR_010936" description="In DFNA2A; dbSNP:rs80358276." evidence="9">
    <original>L</original>
    <variation>H</variation>
    <location>
        <position position="274"/>
    </location>
</feature>
<feature type="sequence variant" id="VAR_008726" description="In DFNA2A; dbSNP:rs80358277." evidence="6">
    <original>W</original>
    <variation>S</variation>
    <location>
        <position position="276"/>
    </location>
</feature>
<feature type="sequence variant" id="VAR_010937" description="In DFNA2A; dbSNP:rs80358278." evidence="7">
    <original>L</original>
    <variation>S</variation>
    <location>
        <position position="281"/>
    </location>
</feature>
<feature type="sequence variant" id="VAR_008727" description="In DFNA2A; loss of potassium selectivity of the pore; dbSNP:rs28937588." evidence="6">
    <original>G</original>
    <variation>C</variation>
    <location>
        <position position="285"/>
    </location>
</feature>
<feature type="sequence variant" id="VAR_001547" description="In DFNA2A; dominant negative effect; abolishes potassium current; dbSNP:rs28937588." evidence="5">
    <original>G</original>
    <variation>S</variation>
    <location>
        <position position="285"/>
    </location>
</feature>
<feature type="sequence variant" id="VAR_065779" description="In DFNA2A; dbSNP:rs137853969." evidence="12">
    <original>G</original>
    <variation>R</variation>
    <location>
        <position position="287"/>
    </location>
</feature>
<feature type="sequence variant" id="VAR_008728" description="In DFNA2A; dbSNP:rs28939710." evidence="6">
    <original>G</original>
    <variation>S</variation>
    <location>
        <position position="321"/>
    </location>
</feature>
<feature type="sequence variant" id="VAR_058971" description="In dbSNP:rs34287852." evidence="5">
    <original>H</original>
    <variation>Q</variation>
    <location>
        <position position="455"/>
    </location>
</feature>
<feature type="mutagenesis site" description="Shifted activation curve of KCNQ4 toward positive potentials compared to wild-type. No difference in current density." evidence="16">
    <original>R</original>
    <variation>A</variation>
    <location>
        <position position="93"/>
    </location>
</feature>
<feature type="mutagenesis site" description="Shifted activation curve of KCNQ4 toward positive potentials compared to wild-type. No difference in current density." evidence="16">
    <original>R</original>
    <variation>A</variation>
    <location>
        <position position="95"/>
    </location>
</feature>
<feature type="mutagenesis site" description="No effect on inhibition by potassium channel toxin SsTX." evidence="14">
    <original>E</original>
    <variation>G</variation>
    <location>
        <position position="123"/>
    </location>
</feature>
<feature type="mutagenesis site" description="No effect on inhibition by potassium channel toxin SsTX." evidence="14">
    <original>H</original>
    <variation>G</variation>
    <location>
        <position position="124"/>
    </location>
</feature>
<feature type="mutagenesis site" description="No effect on inhibition by potassium channel toxin SsTX." evidence="14">
    <original>Q</original>
    <variation>G</variation>
    <location>
        <position position="125"/>
    </location>
</feature>
<feature type="mutagenesis site" description="No effect on inhibition by potassium channel toxin SsTX." evidence="14">
    <original>E</original>
    <variation>G</variation>
    <location>
        <position position="126"/>
    </location>
</feature>
<feature type="mutagenesis site" description="No effect on inhibition by potassium channel toxin SsTX." evidence="14">
    <original>Q</original>
    <variation>G</variation>
    <location>
        <position position="194"/>
    </location>
</feature>
<feature type="mutagenesis site" description="No effect on inhibition by potassium channel toxin SsTX." evidence="14">
    <original>N</original>
    <variation>Q</variation>
    <location>
        <position position="196"/>
    </location>
</feature>
<feature type="mutagenesis site" description="No effect on inhibition by potassium channel toxin SsTX." evidence="14">
    <original>S</original>
    <variation>G</variation>
    <location>
        <position position="205"/>
    </location>
</feature>
<feature type="mutagenesis site" description="No effect on inhibition by potassium channel toxin SsTX." evidence="14">
    <original>Q</original>
    <variation>G</variation>
    <location>
        <position position="210"/>
    </location>
</feature>
<feature type="mutagenesis site" description="No effect on inhibition by potassium channel toxin SsTX." evidence="14">
    <original>R</original>
    <variation>G</variation>
    <location>
        <position position="213"/>
    </location>
</feature>
<feature type="mutagenesis site" description="No effect on inhibition by potassium channel toxin SsTX." evidence="14">
    <original>R</original>
    <variation>G</variation>
    <location>
        <position position="216"/>
    </location>
</feature>
<feature type="mutagenesis site" description="Shifted activation curve of KCNQ4 toward positive potentials compared to wild-type. No difference in current density." evidence="16">
    <original>R</original>
    <variation>A</variation>
    <location>
        <position position="220"/>
    </location>
</feature>
<feature type="mutagenesis site" description="Shifted activation curve of KCNQ4 toward positive potentials compared to wild-type. No difference in current density." evidence="16">
    <original>K</original>
    <variation>A</variation>
    <location>
        <position position="225"/>
    </location>
</feature>
<feature type="mutagenesis site" description="Loss of detectable current." evidence="16">
    <original>K</original>
    <variation>A</variation>
    <location>
        <position position="236"/>
    </location>
</feature>
<feature type="mutagenesis site" description="No effect on inhibition by potassium channel toxin SsTX." evidence="14">
    <original>K</original>
    <variation>G</variation>
    <location>
        <position position="261"/>
    </location>
</feature>
<feature type="mutagenesis site" description="No effect on inhibition by potassium channel toxin SsTX." evidence="14">
    <original>D</original>
    <variation>G</variation>
    <location>
        <position position="262"/>
    </location>
</feature>
<feature type="mutagenesis site" description="Resistant to inhibition by potassium channel toxin SsTX. Normal voltage activation." evidence="14">
    <original>D</original>
    <variation>G</variation>
    <location>
        <position position="266"/>
    </location>
</feature>
<feature type="mutagenesis site" description="No effect on inhibition by potassium channel toxin SsTX." evidence="14">
    <original>S</original>
    <variation>G</variation>
    <location>
        <position position="268"/>
    </location>
</feature>
<feature type="mutagenesis site" description="No effect on inhibition by potassium channel toxin SsTX." evidence="14">
    <original>D</original>
    <variation>G</variation>
    <location>
        <position position="272"/>
    </location>
</feature>
<feature type="mutagenesis site" description="Resistant to inhibition by potassium channel toxin SsTX. Normal voltage activation." evidence="14">
    <original>D</original>
    <variation>G</variation>
    <location>
        <position position="288"/>
    </location>
</feature>
<feature type="mutagenesis site" description="No effect on inhibition by potassium channel toxin SsTX." evidence="14">
    <original>T</original>
    <variation>V</variation>
    <location>
        <position position="290"/>
    </location>
</feature>
<feature type="mutagenesis site" description="No effect on inhibition by potassium channel toxin SsTX." evidence="14">
    <original>H</original>
    <variation>G</variation>
    <location>
        <position position="292"/>
    </location>
</feature>
<feature type="mutagenesis site" description="No effect on inhibition by potassium channel toxin SsTX." evidence="14">
    <original>L</original>
    <variation>V</variation>
    <location>
        <position position="295"/>
    </location>
</feature>
<feature type="mutagenesis site" description="No effect on inhibition by potassium channel toxin SsTX." evidence="14">
    <original>V</original>
    <variation>T</variation>
    <location>
        <position position="298"/>
    </location>
</feature>
<feature type="mutagenesis site" description="Shifted activation curve of KCNQ4 toward positive potentials compared to wild-type; when associated with A-333. Decreased current density; when associated with A-333." evidence="16">
    <original>H</original>
    <variation>A</variation>
    <location>
        <position position="330"/>
    </location>
</feature>
<feature type="mutagenesis site" description="Shifted activation curve of KCNQ4 toward positive potentials compared to wild-type. No difference in current density. Shifted activation curve of KCNQ4 toward positive potentials compared to wild-type; when associated with A-330. Decreased current density; when associated with A-330." evidence="16">
    <original>K</original>
    <variation>A</variation>
    <location>
        <position position="333"/>
    </location>
</feature>
<feature type="mutagenesis site" description="Loss of CALM binding. Impaired location at plasma membrane. Decreased KCNQ4 channel current." evidence="15">
    <original>I</original>
    <variation>A</variation>
    <location>
        <position position="346"/>
    </location>
</feature>
<feature type="mutagenesis site" description="Loss of CALM binding. Impaired location at plasma membrane. Loss of KCNQ4 channel current." evidence="15">
    <original>I</original>
    <variation>D</variation>
    <location>
        <position position="346"/>
    </location>
</feature>
<feature type="mutagenesis site" description="No difference in CALM binding compared to wild-type; when associated with A-540." evidence="15">
    <original>S</original>
    <variation>A</variation>
    <location>
        <position position="536"/>
    </location>
</feature>
<feature type="mutagenesis site" description="Loss of CALM binding; when associated with D-540. Loss of location at plasma membrane; when associated with D-540. Loss of KCNQ4 channel current; when associated with D-540." evidence="15">
    <original>S</original>
    <variation>D</variation>
    <location>
        <position position="536"/>
    </location>
</feature>
<feature type="mutagenesis site" description="No difference in CALM binding compared to wild-type; when associated with A-536." evidence="15">
    <original>L</original>
    <variation>A</variation>
    <location>
        <position position="540"/>
    </location>
</feature>
<feature type="mutagenesis site" description="Loss of CALM binding; when associated with D-536. Loss of location at plasma membrane; when associated with D-536. Loss of KCNQ4 channel current; when associated with D-536." evidence="15">
    <original>L</original>
    <variation>D</variation>
    <location>
        <position position="540"/>
    </location>
</feature>
<feature type="helix" evidence="26">
    <location>
        <begin position="75"/>
        <end position="92"/>
    </location>
</feature>
<feature type="helix" evidence="26">
    <location>
        <begin position="96"/>
        <end position="98"/>
    </location>
</feature>
<feature type="helix" evidence="26">
    <location>
        <begin position="99"/>
        <end position="118"/>
    </location>
</feature>
<feature type="strand" evidence="26">
    <location>
        <begin position="120"/>
        <end position="122"/>
    </location>
</feature>
<feature type="helix" evidence="26">
    <location>
        <begin position="125"/>
        <end position="153"/>
    </location>
</feature>
<feature type="helix" evidence="26">
    <location>
        <begin position="154"/>
        <end position="156"/>
    </location>
</feature>
<feature type="strand" evidence="26">
    <location>
        <begin position="157"/>
        <end position="160"/>
    </location>
</feature>
<feature type="helix" evidence="26">
    <location>
        <begin position="162"/>
        <end position="169"/>
    </location>
</feature>
<feature type="helix" evidence="26">
    <location>
        <begin position="173"/>
        <end position="192"/>
    </location>
</feature>
<feature type="helix" evidence="26">
    <location>
        <begin position="200"/>
        <end position="205"/>
    </location>
</feature>
<feature type="helix" evidence="26">
    <location>
        <begin position="206"/>
        <end position="211"/>
    </location>
</feature>
<feature type="helix" evidence="26">
    <location>
        <begin position="212"/>
        <end position="215"/>
    </location>
</feature>
<feature type="turn" evidence="28">
    <location>
        <begin position="216"/>
        <end position="221"/>
    </location>
</feature>
<feature type="helix" evidence="26">
    <location>
        <begin position="222"/>
        <end position="233"/>
    </location>
</feature>
<feature type="helix" evidence="26">
    <location>
        <begin position="235"/>
        <end position="260"/>
    </location>
</feature>
<feature type="turn" evidence="26">
    <location>
        <begin position="261"/>
        <end position="263"/>
    </location>
</feature>
<feature type="helix" evidence="26">
    <location>
        <begin position="270"/>
        <end position="281"/>
    </location>
</feature>
<feature type="strand" evidence="26">
    <location>
        <begin position="287"/>
        <end position="289"/>
    </location>
</feature>
<feature type="helix" evidence="26">
    <location>
        <begin position="294"/>
        <end position="335"/>
    </location>
</feature>
<feature type="helix" evidence="25">
    <location>
        <begin position="339"/>
        <end position="353"/>
    </location>
</feature>
<feature type="turn" evidence="26">
    <location>
        <begin position="355"/>
        <end position="357"/>
    </location>
</feature>
<feature type="helix" evidence="26">
    <location>
        <begin position="359"/>
        <end position="361"/>
    </location>
</feature>
<feature type="turn" evidence="26">
    <location>
        <begin position="364"/>
        <end position="366"/>
    </location>
</feature>
<feature type="helix" evidence="25">
    <location>
        <begin position="527"/>
        <end position="548"/>
    </location>
</feature>
<feature type="turn" evidence="28">
    <location>
        <begin position="552"/>
        <end position="555"/>
    </location>
</feature>
<feature type="turn" evidence="27">
    <location>
        <begin position="557"/>
        <end position="559"/>
    </location>
</feature>
<feature type="helix" evidence="26">
    <location>
        <begin position="560"/>
        <end position="586"/>
    </location>
</feature>
<feature type="helix" evidence="24">
    <location>
        <begin position="612"/>
        <end position="637"/>
    </location>
</feature>
<sequence>MAEAPPRRLGLGPPPGDAPRAELVALTAVQSEQGEAGGGGSPRRLGLLGSPLPPGAPLPGPGSGSGSACGQRSSAAHKRYRRLQNWVYNVLERPRGWAFVYHVFIFLLVFSCLVLSVLSTIQEHQELANECLLILEFVMIVVFGLEYIVRVWSAGCCCRYRGWQGRFRFARKPFCVIDFIVFVASVAVIAAGTQGNIFATSALRSMRFLQILRMVRMDRRGGTWKLLGSVVYAHSKELITAWYIGFLVLIFASFLVYLAEKDANSDFSSYADSLWWGTITLTTIGYGDKTPHTWLGRVLAAGFALLGISFFALPAGILGSGFALKVQEQHRQKHFEKRRMPAANLIQAAWRLYSTDMSRAYLTATWYYYDSILPSFRELALLFEHVQRARNGGLRPLEVRRAPVPDGAPSRYPPVATCHRPGSTSFCPGESSRMGIKDRIRMGSSQRRTGPSKQHLAPPTMPTSPSSEQVGEATSPTKVQKSWSFNDRTRFRASLRLKPRTSAEDAPSEEVAEEKSYQCELTVDDIMPAVKTVIRSIRILKFLVAKRKFKETLRPYDVKDVIEQYSAGHLDMLGRIKSLQTRVDQIVGRGPGDRKAREKGDKGPSDAEVVDEISMMGRVVKVEKQVQSIEHKLDLLLGFYSRCLRSGTSASLGAVQVPLFDPDITSDYHSPVDHEDISVSAQTLSISRSVSTNMD</sequence>
<dbReference type="EMBL" id="AF105202">
    <property type="protein sequence ID" value="AAD14680.1"/>
    <property type="molecule type" value="mRNA"/>
</dbReference>
<dbReference type="EMBL" id="AF105216">
    <property type="protein sequence ID" value="AAD14681.1"/>
    <property type="molecule type" value="Genomic_DNA"/>
</dbReference>
<dbReference type="EMBL" id="AF105203">
    <property type="protein sequence ID" value="AAD14681.1"/>
    <property type="status" value="JOINED"/>
    <property type="molecule type" value="Genomic_DNA"/>
</dbReference>
<dbReference type="EMBL" id="AF105204">
    <property type="protein sequence ID" value="AAD14681.1"/>
    <property type="status" value="JOINED"/>
    <property type="molecule type" value="Genomic_DNA"/>
</dbReference>
<dbReference type="EMBL" id="AF105205">
    <property type="protein sequence ID" value="AAD14681.1"/>
    <property type="status" value="JOINED"/>
    <property type="molecule type" value="Genomic_DNA"/>
</dbReference>
<dbReference type="EMBL" id="AF105206">
    <property type="protein sequence ID" value="AAD14681.1"/>
    <property type="status" value="JOINED"/>
    <property type="molecule type" value="Genomic_DNA"/>
</dbReference>
<dbReference type="EMBL" id="AF105207">
    <property type="protein sequence ID" value="AAD14681.1"/>
    <property type="status" value="JOINED"/>
    <property type="molecule type" value="Genomic_DNA"/>
</dbReference>
<dbReference type="EMBL" id="AF105208">
    <property type="protein sequence ID" value="AAD14681.1"/>
    <property type="status" value="JOINED"/>
    <property type="molecule type" value="Genomic_DNA"/>
</dbReference>
<dbReference type="EMBL" id="AF105209">
    <property type="protein sequence ID" value="AAD14681.1"/>
    <property type="status" value="JOINED"/>
    <property type="molecule type" value="Genomic_DNA"/>
</dbReference>
<dbReference type="EMBL" id="AF105210">
    <property type="protein sequence ID" value="AAD14681.1"/>
    <property type="status" value="JOINED"/>
    <property type="molecule type" value="Genomic_DNA"/>
</dbReference>
<dbReference type="EMBL" id="AF105211">
    <property type="protein sequence ID" value="AAD14681.1"/>
    <property type="status" value="JOINED"/>
    <property type="molecule type" value="Genomic_DNA"/>
</dbReference>
<dbReference type="EMBL" id="AF105212">
    <property type="protein sequence ID" value="AAD14681.1"/>
    <property type="status" value="JOINED"/>
    <property type="molecule type" value="Genomic_DNA"/>
</dbReference>
<dbReference type="EMBL" id="AF105213">
    <property type="protein sequence ID" value="AAD14681.1"/>
    <property type="status" value="JOINED"/>
    <property type="molecule type" value="Genomic_DNA"/>
</dbReference>
<dbReference type="EMBL" id="AF105214">
    <property type="protein sequence ID" value="AAD14681.1"/>
    <property type="status" value="JOINED"/>
    <property type="molecule type" value="Genomic_DNA"/>
</dbReference>
<dbReference type="EMBL" id="AF105215">
    <property type="protein sequence ID" value="AAD14681.1"/>
    <property type="status" value="JOINED"/>
    <property type="molecule type" value="Genomic_DNA"/>
</dbReference>
<dbReference type="EMBL" id="AC119677">
    <property type="status" value="NOT_ANNOTATED_CDS"/>
    <property type="molecule type" value="Genomic_DNA"/>
</dbReference>
<dbReference type="CCDS" id="CCDS456.1">
    <molecule id="P56696-1"/>
</dbReference>
<dbReference type="RefSeq" id="NP_004691.2">
    <molecule id="P56696-1"/>
    <property type="nucleotide sequence ID" value="NM_004700.3"/>
</dbReference>
<dbReference type="RefSeq" id="NP_751895.1">
    <molecule id="P56696-2"/>
    <property type="nucleotide sequence ID" value="NM_172163.3"/>
</dbReference>
<dbReference type="PDB" id="2OVC">
    <property type="method" value="X-ray"/>
    <property type="resolution" value="2.07 A"/>
    <property type="chains" value="A=610-640"/>
</dbReference>
<dbReference type="PDB" id="4GOW">
    <property type="method" value="X-ray"/>
    <property type="resolution" value="2.60 A"/>
    <property type="chains" value="A=522-593"/>
</dbReference>
<dbReference type="PDB" id="6N5W">
    <property type="method" value="X-ray"/>
    <property type="resolution" value="2.15 A"/>
    <property type="chains" value="A=336-362, B=524-549"/>
</dbReference>
<dbReference type="PDB" id="7BYL">
    <property type="method" value="EM"/>
    <property type="resolution" value="2.50 A"/>
    <property type="chains" value="A/C/E/G=1-695"/>
</dbReference>
<dbReference type="PDB" id="7BYM">
    <property type="method" value="EM"/>
    <property type="resolution" value="3.10 A"/>
    <property type="chains" value="A/C/E/G=1-695"/>
</dbReference>
<dbReference type="PDB" id="7BYN">
    <property type="method" value="EM"/>
    <property type="resolution" value="3.30 A"/>
    <property type="chains" value="A/C/E/G=1-695"/>
</dbReference>
<dbReference type="PDB" id="7VNP">
    <property type="method" value="EM"/>
    <property type="resolution" value="2.79 A"/>
    <property type="chains" value="A/C/E/G=2-650"/>
</dbReference>
<dbReference type="PDB" id="7VNQ">
    <property type="method" value="EM"/>
    <property type="resolution" value="2.96 A"/>
    <property type="chains" value="A/C/E/G=2-650"/>
</dbReference>
<dbReference type="PDB" id="7VNR">
    <property type="method" value="EM"/>
    <property type="resolution" value="2.80 A"/>
    <property type="chains" value="A/C/E/G=2-650"/>
</dbReference>
<dbReference type="PDBsum" id="2OVC"/>
<dbReference type="PDBsum" id="4GOW"/>
<dbReference type="PDBsum" id="6N5W"/>
<dbReference type="PDBsum" id="7BYL"/>
<dbReference type="PDBsum" id="7BYM"/>
<dbReference type="PDBsum" id="7BYN"/>
<dbReference type="PDBsum" id="7VNP"/>
<dbReference type="PDBsum" id="7VNQ"/>
<dbReference type="PDBsum" id="7VNR"/>
<dbReference type="EMDB" id="EMD-30244"/>
<dbReference type="EMDB" id="EMD-30245"/>
<dbReference type="EMDB" id="EMD-30246"/>
<dbReference type="SMR" id="P56696"/>
<dbReference type="BioGRID" id="114580">
    <property type="interactions" value="12"/>
</dbReference>
<dbReference type="CORUM" id="P56696"/>
<dbReference type="FunCoup" id="P56696">
    <property type="interactions" value="379"/>
</dbReference>
<dbReference type="IntAct" id="P56696">
    <property type="interactions" value="1"/>
</dbReference>
<dbReference type="STRING" id="9606.ENSP00000262916"/>
<dbReference type="BindingDB" id="P56696"/>
<dbReference type="ChEMBL" id="CHEMBL3576"/>
<dbReference type="DrugBank" id="DB00228">
    <property type="generic name" value="Enflurane"/>
</dbReference>
<dbReference type="DrugBank" id="DB04953">
    <property type="generic name" value="Ezogabine"/>
</dbReference>
<dbReference type="DrugBank" id="DB06089">
    <property type="generic name" value="ICA-105665"/>
</dbReference>
<dbReference type="DrugBank" id="DB01110">
    <property type="generic name" value="Miconazole"/>
</dbReference>
<dbReference type="DrugBank" id="DB01069">
    <property type="generic name" value="Promethazine"/>
</dbReference>
<dbReference type="DrugCentral" id="P56696"/>
<dbReference type="GuidetoPHARMACOLOGY" id="563"/>
<dbReference type="TCDB" id="1.A.1.15.4">
    <property type="family name" value="the voltage-gated ion channel (vic) superfamily"/>
</dbReference>
<dbReference type="iPTMnet" id="P56696"/>
<dbReference type="PhosphoSitePlus" id="P56696"/>
<dbReference type="BioMuta" id="KCNQ4"/>
<dbReference type="DMDM" id="259016259"/>
<dbReference type="MassIVE" id="P56696"/>
<dbReference type="PaxDb" id="9606-ENSP00000262916"/>
<dbReference type="PeptideAtlas" id="P56696"/>
<dbReference type="ABCD" id="P56696">
    <property type="antibodies" value="1 sequenced antibody"/>
</dbReference>
<dbReference type="Antibodypedia" id="18036">
    <property type="antibodies" value="355 antibodies from 37 providers"/>
</dbReference>
<dbReference type="DNASU" id="9132"/>
<dbReference type="Ensembl" id="ENST00000347132.10">
    <molecule id="P56696-1"/>
    <property type="protein sequence ID" value="ENSP00000262916.6"/>
    <property type="gene ID" value="ENSG00000117013.17"/>
</dbReference>
<dbReference type="Ensembl" id="ENST00000509682.6">
    <molecule id="P56696-2"/>
    <property type="protein sequence ID" value="ENSP00000423756.2"/>
    <property type="gene ID" value="ENSG00000117013.17"/>
</dbReference>
<dbReference type="GeneID" id="9132"/>
<dbReference type="KEGG" id="hsa:9132"/>
<dbReference type="MANE-Select" id="ENST00000347132.10">
    <property type="protein sequence ID" value="ENSP00000262916.6"/>
    <property type="RefSeq nucleotide sequence ID" value="NM_004700.4"/>
    <property type="RefSeq protein sequence ID" value="NP_004691.2"/>
</dbReference>
<dbReference type="UCSC" id="uc001cgh.2">
    <molecule id="P56696-1"/>
    <property type="organism name" value="human"/>
</dbReference>
<dbReference type="AGR" id="HGNC:6298"/>
<dbReference type="CTD" id="9132"/>
<dbReference type="DisGeNET" id="9132"/>
<dbReference type="GeneCards" id="KCNQ4"/>
<dbReference type="GeneReviews" id="KCNQ4"/>
<dbReference type="HGNC" id="HGNC:6298">
    <property type="gene designation" value="KCNQ4"/>
</dbReference>
<dbReference type="HPA" id="ENSG00000117013">
    <property type="expression patterns" value="Tissue enhanced (intestine)"/>
</dbReference>
<dbReference type="MalaCards" id="KCNQ4"/>
<dbReference type="MIM" id="600101">
    <property type="type" value="phenotype"/>
</dbReference>
<dbReference type="MIM" id="603537">
    <property type="type" value="gene"/>
</dbReference>
<dbReference type="neXtProt" id="NX_P56696"/>
<dbReference type="OpenTargets" id="ENSG00000117013"/>
<dbReference type="Orphanet" id="90635">
    <property type="disease" value="Rare autosomal dominant non-syndromic sensorineural deafness type DFNA"/>
</dbReference>
<dbReference type="PharmGKB" id="PA30076"/>
<dbReference type="VEuPathDB" id="HostDB:ENSG00000117013"/>
<dbReference type="eggNOG" id="KOG1419">
    <property type="taxonomic scope" value="Eukaryota"/>
</dbReference>
<dbReference type="GeneTree" id="ENSGT00940000159209"/>
<dbReference type="InParanoid" id="P56696"/>
<dbReference type="OMA" id="YSTDVTH"/>
<dbReference type="OrthoDB" id="8879391at2759"/>
<dbReference type="PAN-GO" id="P56696">
    <property type="GO annotations" value="5 GO annotations based on evolutionary models"/>
</dbReference>
<dbReference type="PhylomeDB" id="P56696"/>
<dbReference type="TreeFam" id="TF315186"/>
<dbReference type="PathwayCommons" id="P56696"/>
<dbReference type="Reactome" id="R-HSA-1296072">
    <property type="pathway name" value="Voltage gated Potassium channels"/>
</dbReference>
<dbReference type="Reactome" id="R-HSA-9662360">
    <property type="pathway name" value="Sensory processing of sound by inner hair cells of the cochlea"/>
</dbReference>
<dbReference type="Reactome" id="R-HSA-9662361">
    <property type="pathway name" value="Sensory processing of sound by outer hair cells of the cochlea"/>
</dbReference>
<dbReference type="SignaLink" id="P56696"/>
<dbReference type="SIGNOR" id="P56696"/>
<dbReference type="BioGRID-ORCS" id="9132">
    <property type="hits" value="28 hits in 1155 CRISPR screens"/>
</dbReference>
<dbReference type="ChiTaRS" id="KCNQ4">
    <property type="organism name" value="human"/>
</dbReference>
<dbReference type="EvolutionaryTrace" id="P56696"/>
<dbReference type="GeneWiki" id="KCNQ4"/>
<dbReference type="GenomeRNAi" id="9132"/>
<dbReference type="Pharos" id="P56696">
    <property type="development level" value="Tclin"/>
</dbReference>
<dbReference type="PRO" id="PR:P56696"/>
<dbReference type="Proteomes" id="UP000005640">
    <property type="component" value="Chromosome 1"/>
</dbReference>
<dbReference type="RNAct" id="P56696">
    <property type="molecule type" value="protein"/>
</dbReference>
<dbReference type="Bgee" id="ENSG00000117013">
    <property type="expression patterns" value="Expressed in pigmented layer of retina and 123 other cell types or tissues"/>
</dbReference>
<dbReference type="ExpressionAtlas" id="P56696">
    <property type="expression patterns" value="baseline and differential"/>
</dbReference>
<dbReference type="GO" id="GO:0009925">
    <property type="term" value="C:basal plasma membrane"/>
    <property type="evidence" value="ECO:0007669"/>
    <property type="project" value="UniProtKB-SubCell"/>
</dbReference>
<dbReference type="GO" id="GO:0005886">
    <property type="term" value="C:plasma membrane"/>
    <property type="evidence" value="ECO:0000304"/>
    <property type="project" value="Reactome"/>
</dbReference>
<dbReference type="GO" id="GO:0008076">
    <property type="term" value="C:voltage-gated potassium channel complex"/>
    <property type="evidence" value="ECO:0000318"/>
    <property type="project" value="GO_Central"/>
</dbReference>
<dbReference type="GO" id="GO:0005267">
    <property type="term" value="F:potassium channel activity"/>
    <property type="evidence" value="ECO:0000304"/>
    <property type="project" value="ProtInc"/>
</dbReference>
<dbReference type="GO" id="GO:0005249">
    <property type="term" value="F:voltage-gated potassium channel activity"/>
    <property type="evidence" value="ECO:0000314"/>
    <property type="project" value="UniProtKB"/>
</dbReference>
<dbReference type="GO" id="GO:0042472">
    <property type="term" value="P:inner ear morphogenesis"/>
    <property type="evidence" value="ECO:0007669"/>
    <property type="project" value="Ensembl"/>
</dbReference>
<dbReference type="GO" id="GO:0071805">
    <property type="term" value="P:potassium ion transmembrane transport"/>
    <property type="evidence" value="ECO:0000318"/>
    <property type="project" value="GO_Central"/>
</dbReference>
<dbReference type="GO" id="GO:0006813">
    <property type="term" value="P:potassium ion transport"/>
    <property type="evidence" value="ECO:0000304"/>
    <property type="project" value="ProtInc"/>
</dbReference>
<dbReference type="GO" id="GO:0007605">
    <property type="term" value="P:sensory perception of sound"/>
    <property type="evidence" value="ECO:0000304"/>
    <property type="project" value="ProtInc"/>
</dbReference>
<dbReference type="DisProt" id="DP02533"/>
<dbReference type="FunFam" id="1.20.120.350:FF:000017">
    <property type="entry name" value="potassium voltage-gated channel subfamily KQT member 1"/>
    <property type="match status" value="1"/>
</dbReference>
<dbReference type="FunFam" id="1.10.287.70:FF:000016">
    <property type="entry name" value="Putative potassium voltage-gated channel subfamily KQT member 2"/>
    <property type="match status" value="1"/>
</dbReference>
<dbReference type="Gene3D" id="1.10.287.70">
    <property type="match status" value="1"/>
</dbReference>
<dbReference type="Gene3D" id="6.10.140.1910">
    <property type="match status" value="2"/>
</dbReference>
<dbReference type="InterPro" id="IPR005821">
    <property type="entry name" value="Ion_trans_dom"/>
</dbReference>
<dbReference type="InterPro" id="IPR003937">
    <property type="entry name" value="K_chnl_volt-dep_KCNQ"/>
</dbReference>
<dbReference type="InterPro" id="IPR013821">
    <property type="entry name" value="K_chnl_volt-dep_KCNQ_C"/>
</dbReference>
<dbReference type="PANTHER" id="PTHR47735">
    <property type="entry name" value="POTASSIUM VOLTAGE-GATED CHANNEL SUBFAMILY KQT MEMBER 4"/>
    <property type="match status" value="1"/>
</dbReference>
<dbReference type="PANTHER" id="PTHR47735:SF7">
    <property type="entry name" value="POTASSIUM VOLTAGE-GATED CHANNEL SUBFAMILY KQT MEMBER 4"/>
    <property type="match status" value="1"/>
</dbReference>
<dbReference type="Pfam" id="PF00520">
    <property type="entry name" value="Ion_trans"/>
    <property type="match status" value="1"/>
</dbReference>
<dbReference type="Pfam" id="PF03520">
    <property type="entry name" value="KCNQ_channel"/>
    <property type="match status" value="1"/>
</dbReference>
<dbReference type="PRINTS" id="PR00169">
    <property type="entry name" value="KCHANNEL"/>
</dbReference>
<dbReference type="PRINTS" id="PR01459">
    <property type="entry name" value="KCNQCHANNEL"/>
</dbReference>
<dbReference type="SUPFAM" id="SSF81324">
    <property type="entry name" value="Voltage-gated potassium channels"/>
    <property type="match status" value="1"/>
</dbReference>
<reference key="1">
    <citation type="journal article" date="1999" name="Cell">
        <title>KCNQ4, a novel potassium channel expressed in sensory outer hair cells, is mutated in dominant deafness.</title>
        <authorList>
            <person name="Kubisch C."/>
            <person name="Schroeder B.C."/>
            <person name="Friedrich T."/>
            <person name="Luetjohann B."/>
            <person name="El-Amraoui A."/>
            <person name="Marlin S."/>
            <person name="Petit C."/>
            <person name="Jentsch T.J."/>
        </authorList>
    </citation>
    <scope>NUCLEOTIDE SEQUENCE [GENOMIC DNA / MRNA] (ISOFORMS 1 AND 2)</scope>
    <scope>VARIANT DFNA2A SER-285</scope>
    <scope>VARIANT GLN-455</scope>
    <scope>CHARACTERIZATION OF VARIANT DFNA2A SER-285</scope>
    <scope>FUNCTION</scope>
    <scope>TRANSPORTER ACTIVITY</scope>
    <scope>TISSUE SPECIFICITY</scope>
    <scope>SUBUNIT</scope>
    <source>
        <tissue>Retina</tissue>
    </source>
</reference>
<reference key="2">
    <citation type="journal article" date="2006" name="Nature">
        <title>The DNA sequence and biological annotation of human chromosome 1.</title>
        <authorList>
            <person name="Gregory S.G."/>
            <person name="Barlow K.F."/>
            <person name="McLay K.E."/>
            <person name="Kaul R."/>
            <person name="Swarbreck D."/>
            <person name="Dunham A."/>
            <person name="Scott C.E."/>
            <person name="Howe K.L."/>
            <person name="Woodfine K."/>
            <person name="Spencer C.C.A."/>
            <person name="Jones M.C."/>
            <person name="Gillson C."/>
            <person name="Searle S."/>
            <person name="Zhou Y."/>
            <person name="Kokocinski F."/>
            <person name="McDonald L."/>
            <person name="Evans R."/>
            <person name="Phillips K."/>
            <person name="Atkinson A."/>
            <person name="Cooper R."/>
            <person name="Jones C."/>
            <person name="Hall R.E."/>
            <person name="Andrews T.D."/>
            <person name="Lloyd C."/>
            <person name="Ainscough R."/>
            <person name="Almeida J.P."/>
            <person name="Ambrose K.D."/>
            <person name="Anderson F."/>
            <person name="Andrew R.W."/>
            <person name="Ashwell R.I.S."/>
            <person name="Aubin K."/>
            <person name="Babbage A.K."/>
            <person name="Bagguley C.L."/>
            <person name="Bailey J."/>
            <person name="Beasley H."/>
            <person name="Bethel G."/>
            <person name="Bird C.P."/>
            <person name="Bray-Allen S."/>
            <person name="Brown J.Y."/>
            <person name="Brown A.J."/>
            <person name="Buckley D."/>
            <person name="Burton J."/>
            <person name="Bye J."/>
            <person name="Carder C."/>
            <person name="Chapman J.C."/>
            <person name="Clark S.Y."/>
            <person name="Clarke G."/>
            <person name="Clee C."/>
            <person name="Cobley V."/>
            <person name="Collier R.E."/>
            <person name="Corby N."/>
            <person name="Coville G.J."/>
            <person name="Davies J."/>
            <person name="Deadman R."/>
            <person name="Dunn M."/>
            <person name="Earthrowl M."/>
            <person name="Ellington A.G."/>
            <person name="Errington H."/>
            <person name="Frankish A."/>
            <person name="Frankland J."/>
            <person name="French L."/>
            <person name="Garner P."/>
            <person name="Garnett J."/>
            <person name="Gay L."/>
            <person name="Ghori M.R.J."/>
            <person name="Gibson R."/>
            <person name="Gilby L.M."/>
            <person name="Gillett W."/>
            <person name="Glithero R.J."/>
            <person name="Grafham D.V."/>
            <person name="Griffiths C."/>
            <person name="Griffiths-Jones S."/>
            <person name="Grocock R."/>
            <person name="Hammond S."/>
            <person name="Harrison E.S.I."/>
            <person name="Hart E."/>
            <person name="Haugen E."/>
            <person name="Heath P.D."/>
            <person name="Holmes S."/>
            <person name="Holt K."/>
            <person name="Howden P.J."/>
            <person name="Hunt A.R."/>
            <person name="Hunt S.E."/>
            <person name="Hunter G."/>
            <person name="Isherwood J."/>
            <person name="James R."/>
            <person name="Johnson C."/>
            <person name="Johnson D."/>
            <person name="Joy A."/>
            <person name="Kay M."/>
            <person name="Kershaw J.K."/>
            <person name="Kibukawa M."/>
            <person name="Kimberley A.M."/>
            <person name="King A."/>
            <person name="Knights A.J."/>
            <person name="Lad H."/>
            <person name="Laird G."/>
            <person name="Lawlor S."/>
            <person name="Leongamornlert D.A."/>
            <person name="Lloyd D.M."/>
            <person name="Loveland J."/>
            <person name="Lovell J."/>
            <person name="Lush M.J."/>
            <person name="Lyne R."/>
            <person name="Martin S."/>
            <person name="Mashreghi-Mohammadi M."/>
            <person name="Matthews L."/>
            <person name="Matthews N.S.W."/>
            <person name="McLaren S."/>
            <person name="Milne S."/>
            <person name="Mistry S."/>
            <person name="Moore M.J.F."/>
            <person name="Nickerson T."/>
            <person name="O'Dell C.N."/>
            <person name="Oliver K."/>
            <person name="Palmeiri A."/>
            <person name="Palmer S.A."/>
            <person name="Parker A."/>
            <person name="Patel D."/>
            <person name="Pearce A.V."/>
            <person name="Peck A.I."/>
            <person name="Pelan S."/>
            <person name="Phelps K."/>
            <person name="Phillimore B.J."/>
            <person name="Plumb R."/>
            <person name="Rajan J."/>
            <person name="Raymond C."/>
            <person name="Rouse G."/>
            <person name="Saenphimmachak C."/>
            <person name="Sehra H.K."/>
            <person name="Sheridan E."/>
            <person name="Shownkeen R."/>
            <person name="Sims S."/>
            <person name="Skuce C.D."/>
            <person name="Smith M."/>
            <person name="Steward C."/>
            <person name="Subramanian S."/>
            <person name="Sycamore N."/>
            <person name="Tracey A."/>
            <person name="Tromans A."/>
            <person name="Van Helmond Z."/>
            <person name="Wall M."/>
            <person name="Wallis J.M."/>
            <person name="White S."/>
            <person name="Whitehead S.L."/>
            <person name="Wilkinson J.E."/>
            <person name="Willey D.L."/>
            <person name="Williams H."/>
            <person name="Wilming L."/>
            <person name="Wray P.W."/>
            <person name="Wu Z."/>
            <person name="Coulson A."/>
            <person name="Vaudin M."/>
            <person name="Sulston J.E."/>
            <person name="Durbin R.M."/>
            <person name="Hubbard T."/>
            <person name="Wooster R."/>
            <person name="Dunham I."/>
            <person name="Carter N.P."/>
            <person name="McVean G."/>
            <person name="Ross M.T."/>
            <person name="Harrow J."/>
            <person name="Olson M.V."/>
            <person name="Beck S."/>
            <person name="Rogers J."/>
            <person name="Bentley D.R."/>
        </authorList>
    </citation>
    <scope>NUCLEOTIDE SEQUENCE [LARGE SCALE GENOMIC DNA]</scope>
</reference>
<reference key="3">
    <citation type="journal article" date="2000" name="J. Physiol. (Lond.)">
        <title>Inhibition of KCNQ1-4 potassium channels expressed in mammalian cells via M1 muscarinic acetylcholine receptors.</title>
        <authorList>
            <person name="Selyanko A.A."/>
            <person name="Hadley J.K."/>
            <person name="Wood I.C."/>
            <person name="Abogadie F.C."/>
            <person name="Jentsch T.J."/>
            <person name="Brown D.A."/>
        </authorList>
    </citation>
    <scope>ACTIVITY REGULATION</scope>
</reference>
<reference key="4">
    <citation type="journal article" date="2001" name="Am. J. Physiol.">
        <title>KCNQ4 channels expressed in mammalian cells: functional characteristics and pharmacology.</title>
        <authorList>
            <person name="Soegaard R."/>
            <person name="Ljungstroem T."/>
            <person name="Pedersen K.A."/>
            <person name="Oelesen S.-P."/>
            <person name="Jensen B.S."/>
        </authorList>
    </citation>
    <scope>FUNCTION</scope>
    <scope>TRANSPORTER ACTIVITY</scope>
    <scope>ACTIVITY REGULATION</scope>
    <scope>PHARMACOLOGICAL CHARACTERIZATION</scope>
</reference>
<reference key="5">
    <citation type="journal article" date="2013" name="PLoS ONE">
        <title>Distinct roles of molecular chaperones HSP90alpha and HSP90beta in the biogenesis of KCNQ4 channels.</title>
        <authorList>
            <person name="Gao Y."/>
            <person name="Yechikov S."/>
            <person name="Vazquez A.E."/>
            <person name="Chen D."/>
            <person name="Nie L."/>
        </authorList>
    </citation>
    <scope>INTERACTION WITH HSP90AB1</scope>
</reference>
<reference key="6">
    <citation type="journal article" date="2018" name="Proc. Natl. Acad. Sci. U.S.A.">
        <title>Centipedes subdue giant prey by blocking KCNQ channels.</title>
        <authorList>
            <person name="Luo L."/>
            <person name="Li B."/>
            <person name="Wang S."/>
            <person name="Wu F."/>
            <person name="Wang X."/>
            <person name="Liang P."/>
            <person name="Ombati R."/>
            <person name="Chen J."/>
            <person name="Lu X."/>
            <person name="Cui J."/>
            <person name="Lu Q."/>
            <person name="Zhang L."/>
            <person name="Zhou M."/>
            <person name="Tian C."/>
            <person name="Yang S."/>
            <person name="Lai R."/>
        </authorList>
    </citation>
    <scope>MUTAGENESIS OF GLU-123; HIS-124; GLN-125; GLU-126; GLN-194; ASN-196; SER-205; GLN-210; ARG-213; ARG-216; LYS-261; ASP-262; ASP-266; SER-268; ASP-272; ASP-288; THR-290; HIS-292; LEU-295 AND VAL-298</scope>
</reference>
<reference evidence="20" key="7">
    <citation type="journal article" date="2007" name="Neuron">
        <title>Structural insight into KCNQ (Kv7) channel assembly and channelopathy.</title>
        <authorList>
            <person name="Howard R.J."/>
            <person name="Clark K.A."/>
            <person name="Holton J.M."/>
            <person name="Minor D.L. Jr."/>
        </authorList>
    </citation>
    <scope>X-RAY CRYSTALLOGRAPHY (2.07 ANGSTROMS) OF 610-640</scope>
    <scope>SUBUNIT</scope>
    <scope>DOMAIN COILED-COIL</scope>
</reference>
<reference key="8">
    <citation type="journal article" date="2018" name="Neuron">
        <title>A calmodulin C-lobe Ca(2+)-dependent switch governs Kv7 channel function.</title>
        <authorList>
            <person name="Chang A."/>
            <person name="Abderemane-Ali F."/>
            <person name="Hura G.L."/>
            <person name="Rossen N.D."/>
            <person name="Gate R.E."/>
            <person name="Minor D.L."/>
        </authorList>
    </citation>
    <scope>X-RAY CRYSTALLOGRAPHY (2.20 ANGSTROMS) OF 325-367 AND 370-398</scope>
    <scope>ACTIVITY REGULATION</scope>
    <scope>DOMAIN</scope>
    <scope>INTERACTION WITH CALM</scope>
    <scope>MUTAGENESIS OF ILE-346; SER-536 AND LEU-540</scope>
</reference>
<reference evidence="21 22 23" key="9">
    <citation type="journal article" date="2022" name="Neuron">
        <title>Structural insights into the lipid and ligand regulation of a human neuronal KCNQ channel.</title>
        <authorList>
            <person name="Zheng Y."/>
            <person name="Liu H."/>
            <person name="Chen Y."/>
            <person name="Dong S."/>
            <person name="Wang F."/>
            <person name="Wang S."/>
            <person name="Li G.L."/>
            <person name="Shu Y."/>
            <person name="Xu F."/>
        </authorList>
    </citation>
    <scope>STRUCTURE BY ELECTRON MICROSCOPY (2.79 ANGSTROMS) OF 2-650 IN COMPLEX WITH PHOSPHATIDYLINOSITOL 4,5-BISPHOSPHATE AND CALM3</scope>
    <scope>FUNCTION</scope>
    <scope>TRANSPORTER ACTIVITY</scope>
    <scope>INTERACTION WITH CALM3</scope>
    <scope>ACTIVITY REGULATION</scope>
    <scope>SUBCELLULAR LOCATION</scope>
    <scope>DOMAIN</scope>
    <scope>MUTAGENESIS OF ARG-93; ARG-95; ARG-220; LYS-225; LYS-236; HIS-330 AND LYS-333</scope>
</reference>
<reference key="10">
    <citation type="journal article" date="1999" name="Hum. Mol. Genet.">
        <title>Mutations in the KCNQ4 gene are responsible for autosomal dominant deafness in four DFNA2 families.</title>
        <authorList>
            <person name="Coucke P.J."/>
            <person name="Van Hauwe P."/>
            <person name="Kelley P.M."/>
            <person name="Kunst H."/>
            <person name="Schatteman I."/>
            <person name="Van Velzen D."/>
            <person name="Meyers J."/>
            <person name="Ensink R.J."/>
            <person name="Verstreken M."/>
            <person name="Declau F."/>
            <person name="Marres H."/>
            <person name="Kastury K."/>
            <person name="Bhasin S."/>
            <person name="McGuirt W.T."/>
            <person name="Smith R.J.H."/>
            <person name="Cremers C.W.R.J."/>
            <person name="Van de Heyning P."/>
            <person name="Willems P.J."/>
            <person name="Smith S.D."/>
            <person name="Van Camp G."/>
        </authorList>
    </citation>
    <scope>VARIANTS DFNA2A SER-276; CYS-285 AND SER-321</scope>
    <scope>FUNCTION</scope>
</reference>
<reference key="11">
    <citation type="journal article" date="1999" name="Hum. Mutat.">
        <title>Novel mutation in the KCNQ4 gene in a large kindred with dominant progressive hearing loss.</title>
        <authorList>
            <person name="Talebizadeh Z."/>
            <person name="Kelley P.M."/>
            <person name="Askew J.W."/>
            <person name="Beisel K.W."/>
            <person name="Smith S.D."/>
        </authorList>
    </citation>
    <scope>VARIANT DFNA2A SER-281</scope>
</reference>
<reference key="12">
    <citation type="journal article" date="2000" name="Am. J. Med. Genet.">
        <title>Mutations in the KCNQ4 K+ channel gene, responsible for autosomal dominant hearing loss, cluster in the channel pore region.</title>
        <authorList>
            <person name="Van Hauwe P."/>
            <person name="Coucke P.J."/>
            <person name="Ensink R.J."/>
            <person name="Huygen P."/>
            <person name="Cremers C.W.R.J."/>
            <person name="Van Camp G."/>
        </authorList>
    </citation>
    <scope>VARIANT DFNA2A HIS-274</scope>
</reference>
<reference key="13">
    <citation type="journal article" date="2011" name="Arch. Otolaryngol. Head Neck Surg.">
        <title>Autosomal dominant progressive sensorineural hearing loss due to a novel mutation in the KCNQ4 gene.</title>
        <authorList>
            <person name="Arnett J."/>
            <person name="Emery S.B."/>
            <person name="Kim T.B."/>
            <person name="Boerst A.K."/>
            <person name="Lee K."/>
            <person name="Leal S.M."/>
            <person name="Lesperance M.M."/>
        </authorList>
    </citation>
    <scope>VARIANT DFNA2A ARG-287</scope>
</reference>
<proteinExistence type="evidence at protein level"/>
<comment type="function">
    <text evidence="5 6 10 16">Pore-forming subunit of the voltage-gated potassium (Kv) channel involved in the regulation of sensory cells excitability in the cochlea (PubMed:10025409, PubMed:34767770). KCNQ4/Kv7.4 channel is composed of 4 pore-forming subunits assembled as tetramers (PubMed:34767770). Promotes the outflow of potassium ions in the repolarization phase of action potential which plays a role in regulating membrane potential of excitable cells (PubMed:10025409, PubMed:11245603, PubMed:34767770). The channel conducts a slowly activating and deactivating current (PubMed:10025409, PubMed:11245603). Current often shows some inward rectification at positive potentials (PubMed:10025409). Channel may be selectively permeable in vitro to other cations besides potassium, in decreasing order of affinity K(+) = Rb(+) &gt; Cs(+) &gt; Na(+) (PubMed:10025409). Important for normal physiological function of inner ear such as sensory perception of sound (PubMed:10025409, PubMed:10369879).</text>
</comment>
<comment type="catalytic activity">
    <reaction evidence="5 10 16">
        <text>K(+)(in) = K(+)(out)</text>
        <dbReference type="Rhea" id="RHEA:29463"/>
        <dbReference type="ChEBI" id="CHEBI:29103"/>
    </reaction>
</comment>
<comment type="activity regulation">
    <text evidence="5 8 10 15 16">Two molecules of phosphatidylinositol-4,5-bisphosphate (PIP2-I and PIP2-II) are essential to activate KCNQ4 channel by inducing the coupling of the voltage-sensing domain (VSD) and the pore-forming domain (PD). Upon channel activation, PIP2-I and PIP2-II disrupt the VSD-calmodulin/CALM interaction, causing the release of CALM from the VSD which triggers the opening of the gate (PubMed:34767770). Calcium suppresses KCNQ4 channel current through calcium-bound CALM C-terminus (PubMed:29429937). Therefore CALM acts as calcium sensor that controls channel activity (PubMed:29429937). ML213 potentiates KCNQ4 channel (PubMed:34767770). KCNQ4 channel is blocked by linopirdin, XE991 and bepridil, whereas clofilium is without significant effect (PubMed:10025409, PubMed:11245603). Muscarinic agonist oxotremorine-M strongly suppress KCNQ4 current in CHO cells in which cloned KCNQ4 channels were coexpressed with M1 muscarinic receptors (PubMed:10713961).</text>
</comment>
<comment type="subunit">
    <text evidence="5 11 13 15 16">Homotetramer (PubMed:17329207). Interacts (via C-terminus) with calmodulin; forms a heterooctameric structure (with 4:4 KCNQ1:CALM stoichiometry); the interaction is calcium-independent, constitutive, participates in the proper assembly of a functional channel (PubMed:29429937, PubMed:34767770). The interaction with calcium-free CALM controls channel trafficking whereas interaction with calcium-bound CALM regulates channel gating (PubMed:29429937). May form a functional heteromultimeric channel with KCNQ3 (PubMed:10025409). Interacts with HSP90AB1; promotes cell surface expression of KCNQ4 (PubMed:23431407).</text>
</comment>
<comment type="subcellular location">
    <subcellularLocation>
        <location evidence="2">Basal cell membrane</location>
        <topology evidence="16">Multi-pass membrane protein</topology>
    </subcellularLocation>
    <text evidence="2">Situated at the basal membrane of cochlear outer hair cells.</text>
</comment>
<comment type="alternative products">
    <event type="alternative splicing"/>
    <isoform>
        <id>P56696-1</id>
        <name>1</name>
        <sequence type="displayed"/>
    </isoform>
    <isoform>
        <id>P56696-2</id>
        <name>2</name>
        <sequence type="described" ref="VSP_001013"/>
    </isoform>
    <text>Additional isoforms seem to exist.</text>
</comment>
<comment type="tissue specificity">
    <text evidence="5">Expressed in the outer, but not the inner, sensory hair cells of the cochlea (PubMed:10025409). Slightly expressed in heart, brain and skeletal muscle (PubMed:10025409).</text>
</comment>
<comment type="domain">
    <text evidence="16">Each channel subunit contains six transmembrane segments (S1-S6) with S1-S4 forming one voltage sensing domain (VSD) and S5-S6 contributing to form one quarter of an interlocking pore-forming domain (PD).</text>
</comment>
<comment type="domain">
    <text evidence="15 16">The CALM binding domains correspond to the first two membrane-proximal helical regions that interact with a single calmodulin/CALM molecule forming a clamp-like structure (PubMed:29429937, PubMed:34767770). CALM N-terminus binds to the second helix in both calcium-free and calcium-bound forms and regulates channel trafficking. CALM C-terminus binds to the first helice in calcium-free form; this interaction is disrupted by calcium binding which regulates channel electrophysiological activity (PubMed:29429937).</text>
</comment>
<comment type="domain">
    <text evidence="11">The C-terminal assembly domain carries the major determinants of tetramerization and subunit assembly specificity. Its coiled-coil region is four-stranded.</text>
</comment>
<comment type="disease" evidence="5 6 7 9 12">
    <disease id="DI-00832">
        <name>Deafness, autosomal dominant, 2A</name>
        <acronym>DFNA2A</acronym>
        <description>A form of non-syndromic sensorineural hearing loss. Sensorineural deafness results from damage to the neural receptors of the inner ear, the nerve pathways to the brain, or the area of the brain that receives sound information.</description>
        <dbReference type="MIM" id="600101"/>
    </disease>
    <text>The disease is caused by variants affecting the gene represented in this entry.</text>
</comment>
<comment type="miscellaneous">
    <text>Mutagenesis experiments were carried out by expressing in Xenopus oocytes KCNQ4 mutants either individually (homomultimers) or in combination with wild-type KCNQ4 (mut/wt homomultimers) in a ratio of 1:1, to mimic the situation in a heterozygous DFNA2 patient.</text>
</comment>
<comment type="similarity">
    <text evidence="18">Belongs to the potassium channel family. KQT (TC 1.A.1.15) subfamily. Kv7.4/KCNQ4 sub-subfamily.</text>
</comment>
<comment type="online information" name="Hereditary hearing loss homepage">
    <link uri="https://hereditaryhearingloss.org/dominant"/>
    <text>Gene page</text>
</comment>
<organism>
    <name type="scientific">Homo sapiens</name>
    <name type="common">Human</name>
    <dbReference type="NCBI Taxonomy" id="9606"/>
    <lineage>
        <taxon>Eukaryota</taxon>
        <taxon>Metazoa</taxon>
        <taxon>Chordata</taxon>
        <taxon>Craniata</taxon>
        <taxon>Vertebrata</taxon>
        <taxon>Euteleostomi</taxon>
        <taxon>Mammalia</taxon>
        <taxon>Eutheria</taxon>
        <taxon>Euarchontoglires</taxon>
        <taxon>Primates</taxon>
        <taxon>Haplorrhini</taxon>
        <taxon>Catarrhini</taxon>
        <taxon>Hominidae</taxon>
        <taxon>Homo</taxon>
    </lineage>
</organism>
<keyword id="KW-0002">3D-structure</keyword>
<keyword id="KW-0025">Alternative splicing</keyword>
<keyword id="KW-1003">Cell membrane</keyword>
<keyword id="KW-0175">Coiled coil</keyword>
<keyword id="KW-0209">Deafness</keyword>
<keyword id="KW-0225">Disease variant</keyword>
<keyword id="KW-1009">Hearing</keyword>
<keyword id="KW-0407">Ion channel</keyword>
<keyword id="KW-0406">Ion transport</keyword>
<keyword id="KW-0472">Membrane</keyword>
<keyword id="KW-1010">Non-syndromic deafness</keyword>
<keyword id="KW-0630">Potassium</keyword>
<keyword id="KW-0631">Potassium channel</keyword>
<keyword id="KW-0633">Potassium transport</keyword>
<keyword id="KW-1267">Proteomics identification</keyword>
<keyword id="KW-1185">Reference proteome</keyword>
<keyword id="KW-0812">Transmembrane</keyword>
<keyword id="KW-1133">Transmembrane helix</keyword>
<keyword id="KW-0813">Transport</keyword>
<keyword id="KW-0851">Voltage-gated channel</keyword>
<protein>
    <recommendedName>
        <fullName>Potassium voltage-gated channel subfamily KQT member 4</fullName>
    </recommendedName>
    <alternativeName>
        <fullName>KQT-like 4</fullName>
    </alternativeName>
    <alternativeName>
        <fullName>Potassium channel subunit alpha KvLQT4</fullName>
    </alternativeName>
    <alternativeName>
        <fullName>Voltage-gated potassium channel subunit Kv7.4</fullName>
    </alternativeName>
</protein>
<gene>
    <name evidence="19" type="primary">KCNQ4</name>
</gene>
<name>KCNQ4_HUMAN</name>
<evidence type="ECO:0000250" key="1">
    <source>
        <dbReference type="UniProtKB" id="P51787"/>
    </source>
</evidence>
<evidence type="ECO:0000250" key="2">
    <source>
        <dbReference type="UniProtKB" id="Q9JK96"/>
    </source>
</evidence>
<evidence type="ECO:0000255" key="3"/>
<evidence type="ECO:0000256" key="4">
    <source>
        <dbReference type="SAM" id="MobiDB-lite"/>
    </source>
</evidence>
<evidence type="ECO:0000269" key="5">
    <source>
    </source>
</evidence>
<evidence type="ECO:0000269" key="6">
    <source>
    </source>
</evidence>
<evidence type="ECO:0000269" key="7">
    <source>
    </source>
</evidence>
<evidence type="ECO:0000269" key="8">
    <source>
    </source>
</evidence>
<evidence type="ECO:0000269" key="9">
    <source>
    </source>
</evidence>
<evidence type="ECO:0000269" key="10">
    <source>
    </source>
</evidence>
<evidence type="ECO:0000269" key="11">
    <source>
    </source>
</evidence>
<evidence type="ECO:0000269" key="12">
    <source>
    </source>
</evidence>
<evidence type="ECO:0000269" key="13">
    <source>
    </source>
</evidence>
<evidence type="ECO:0000269" key="14">
    <source>
    </source>
</evidence>
<evidence type="ECO:0000269" key="15">
    <source>
    </source>
</evidence>
<evidence type="ECO:0000269" key="16">
    <source>
    </source>
</evidence>
<evidence type="ECO:0000303" key="17">
    <source>
    </source>
</evidence>
<evidence type="ECO:0000305" key="18"/>
<evidence type="ECO:0000312" key="19">
    <source>
        <dbReference type="HGNC" id="HGNC:6298"/>
    </source>
</evidence>
<evidence type="ECO:0007744" key="20">
    <source>
        <dbReference type="PDB" id="2OVC"/>
    </source>
</evidence>
<evidence type="ECO:0007744" key="21">
    <source>
        <dbReference type="PDB" id="7VNP"/>
    </source>
</evidence>
<evidence type="ECO:0007744" key="22">
    <source>
        <dbReference type="PDB" id="7VNQ"/>
    </source>
</evidence>
<evidence type="ECO:0007744" key="23">
    <source>
        <dbReference type="PDB" id="7VNR"/>
    </source>
</evidence>
<evidence type="ECO:0007829" key="24">
    <source>
        <dbReference type="PDB" id="2OVC"/>
    </source>
</evidence>
<evidence type="ECO:0007829" key="25">
    <source>
        <dbReference type="PDB" id="6N5W"/>
    </source>
</evidence>
<evidence type="ECO:0007829" key="26">
    <source>
        <dbReference type="PDB" id="7BYL"/>
    </source>
</evidence>
<evidence type="ECO:0007829" key="27">
    <source>
        <dbReference type="PDB" id="7VNP"/>
    </source>
</evidence>
<evidence type="ECO:0007829" key="28">
    <source>
        <dbReference type="PDB" id="7VNR"/>
    </source>
</evidence>